<name>METK_MARMM</name>
<dbReference type="EC" id="2.5.1.6" evidence="1"/>
<dbReference type="EMBL" id="CP000449">
    <property type="protein sequence ID" value="ABI66731.1"/>
    <property type="molecule type" value="Genomic_DNA"/>
</dbReference>
<dbReference type="RefSeq" id="WP_011644376.1">
    <property type="nucleotide sequence ID" value="NC_008347.1"/>
</dbReference>
<dbReference type="SMR" id="Q0ALW2"/>
<dbReference type="STRING" id="394221.Mmar10_2439"/>
<dbReference type="KEGG" id="mmr:Mmar10_2439"/>
<dbReference type="eggNOG" id="COG0192">
    <property type="taxonomic scope" value="Bacteria"/>
</dbReference>
<dbReference type="HOGENOM" id="CLU_041802_1_1_5"/>
<dbReference type="OrthoDB" id="9801686at2"/>
<dbReference type="UniPathway" id="UPA00315">
    <property type="reaction ID" value="UER00080"/>
</dbReference>
<dbReference type="Proteomes" id="UP000001964">
    <property type="component" value="Chromosome"/>
</dbReference>
<dbReference type="GO" id="GO:0005737">
    <property type="term" value="C:cytoplasm"/>
    <property type="evidence" value="ECO:0007669"/>
    <property type="project" value="UniProtKB-SubCell"/>
</dbReference>
<dbReference type="GO" id="GO:0005524">
    <property type="term" value="F:ATP binding"/>
    <property type="evidence" value="ECO:0007669"/>
    <property type="project" value="UniProtKB-UniRule"/>
</dbReference>
<dbReference type="GO" id="GO:0000287">
    <property type="term" value="F:magnesium ion binding"/>
    <property type="evidence" value="ECO:0007669"/>
    <property type="project" value="UniProtKB-UniRule"/>
</dbReference>
<dbReference type="GO" id="GO:0004478">
    <property type="term" value="F:methionine adenosyltransferase activity"/>
    <property type="evidence" value="ECO:0007669"/>
    <property type="project" value="UniProtKB-UniRule"/>
</dbReference>
<dbReference type="GO" id="GO:0006730">
    <property type="term" value="P:one-carbon metabolic process"/>
    <property type="evidence" value="ECO:0007669"/>
    <property type="project" value="UniProtKB-KW"/>
</dbReference>
<dbReference type="GO" id="GO:0006556">
    <property type="term" value="P:S-adenosylmethionine biosynthetic process"/>
    <property type="evidence" value="ECO:0007669"/>
    <property type="project" value="UniProtKB-UniRule"/>
</dbReference>
<dbReference type="CDD" id="cd18079">
    <property type="entry name" value="S-AdoMet_synt"/>
    <property type="match status" value="1"/>
</dbReference>
<dbReference type="FunFam" id="3.30.300.10:FF:000003">
    <property type="entry name" value="S-adenosylmethionine synthase"/>
    <property type="match status" value="1"/>
</dbReference>
<dbReference type="Gene3D" id="3.30.300.10">
    <property type="match status" value="3"/>
</dbReference>
<dbReference type="HAMAP" id="MF_00086">
    <property type="entry name" value="S_AdoMet_synth1"/>
    <property type="match status" value="1"/>
</dbReference>
<dbReference type="InterPro" id="IPR022631">
    <property type="entry name" value="ADOMET_SYNTHASE_CS"/>
</dbReference>
<dbReference type="InterPro" id="IPR022630">
    <property type="entry name" value="S-AdoMet_synt_C"/>
</dbReference>
<dbReference type="InterPro" id="IPR022629">
    <property type="entry name" value="S-AdoMet_synt_central"/>
</dbReference>
<dbReference type="InterPro" id="IPR022628">
    <property type="entry name" value="S-AdoMet_synt_N"/>
</dbReference>
<dbReference type="InterPro" id="IPR002133">
    <property type="entry name" value="S-AdoMet_synthetase"/>
</dbReference>
<dbReference type="InterPro" id="IPR022636">
    <property type="entry name" value="S-AdoMet_synthetase_sfam"/>
</dbReference>
<dbReference type="NCBIfam" id="TIGR01034">
    <property type="entry name" value="metK"/>
    <property type="match status" value="1"/>
</dbReference>
<dbReference type="PANTHER" id="PTHR11964">
    <property type="entry name" value="S-ADENOSYLMETHIONINE SYNTHETASE"/>
    <property type="match status" value="1"/>
</dbReference>
<dbReference type="Pfam" id="PF02773">
    <property type="entry name" value="S-AdoMet_synt_C"/>
    <property type="match status" value="1"/>
</dbReference>
<dbReference type="Pfam" id="PF02772">
    <property type="entry name" value="S-AdoMet_synt_M"/>
    <property type="match status" value="1"/>
</dbReference>
<dbReference type="Pfam" id="PF00438">
    <property type="entry name" value="S-AdoMet_synt_N"/>
    <property type="match status" value="1"/>
</dbReference>
<dbReference type="PIRSF" id="PIRSF000497">
    <property type="entry name" value="MAT"/>
    <property type="match status" value="1"/>
</dbReference>
<dbReference type="SUPFAM" id="SSF55973">
    <property type="entry name" value="S-adenosylmethionine synthetase"/>
    <property type="match status" value="3"/>
</dbReference>
<dbReference type="PROSITE" id="PS00376">
    <property type="entry name" value="ADOMET_SYNTHASE_1"/>
    <property type="match status" value="1"/>
</dbReference>
<dbReference type="PROSITE" id="PS00377">
    <property type="entry name" value="ADOMET_SYNTHASE_2"/>
    <property type="match status" value="1"/>
</dbReference>
<evidence type="ECO:0000255" key="1">
    <source>
        <dbReference type="HAMAP-Rule" id="MF_00086"/>
    </source>
</evidence>
<accession>Q0ALW2</accession>
<feature type="chain" id="PRO_0000302935" description="S-adenosylmethionine synthase">
    <location>
        <begin position="1"/>
        <end position="388"/>
    </location>
</feature>
<feature type="region of interest" description="Flexible loop" evidence="1">
    <location>
        <begin position="102"/>
        <end position="112"/>
    </location>
</feature>
<feature type="binding site" description="in other chain" evidence="1">
    <location>
        <position position="17"/>
    </location>
    <ligand>
        <name>ATP</name>
        <dbReference type="ChEBI" id="CHEBI:30616"/>
        <note>ligand shared between two neighboring subunits</note>
    </ligand>
</feature>
<feature type="binding site" evidence="1">
    <location>
        <position position="19"/>
    </location>
    <ligand>
        <name>Mg(2+)</name>
        <dbReference type="ChEBI" id="CHEBI:18420"/>
    </ligand>
</feature>
<feature type="binding site" evidence="1">
    <location>
        <position position="45"/>
    </location>
    <ligand>
        <name>K(+)</name>
        <dbReference type="ChEBI" id="CHEBI:29103"/>
    </ligand>
</feature>
<feature type="binding site" description="in other chain" evidence="1">
    <location>
        <position position="58"/>
    </location>
    <ligand>
        <name>L-methionine</name>
        <dbReference type="ChEBI" id="CHEBI:57844"/>
        <note>ligand shared between two neighboring subunits</note>
    </ligand>
</feature>
<feature type="binding site" description="in other chain" evidence="1">
    <location>
        <position position="102"/>
    </location>
    <ligand>
        <name>L-methionine</name>
        <dbReference type="ChEBI" id="CHEBI:57844"/>
        <note>ligand shared between two neighboring subunits</note>
    </ligand>
</feature>
<feature type="binding site" description="in other chain" evidence="1">
    <location>
        <begin position="167"/>
        <end position="169"/>
    </location>
    <ligand>
        <name>ATP</name>
        <dbReference type="ChEBI" id="CHEBI:30616"/>
        <note>ligand shared between two neighboring subunits</note>
    </ligand>
</feature>
<feature type="binding site" evidence="1">
    <location>
        <position position="241"/>
    </location>
    <ligand>
        <name>ATP</name>
        <dbReference type="ChEBI" id="CHEBI:30616"/>
        <note>ligand shared between two neighboring subunits</note>
    </ligand>
</feature>
<feature type="binding site" evidence="1">
    <location>
        <position position="241"/>
    </location>
    <ligand>
        <name>L-methionine</name>
        <dbReference type="ChEBI" id="CHEBI:57844"/>
        <note>ligand shared between two neighboring subunits</note>
    </ligand>
</feature>
<feature type="binding site" description="in other chain" evidence="1">
    <location>
        <begin position="247"/>
        <end position="248"/>
    </location>
    <ligand>
        <name>ATP</name>
        <dbReference type="ChEBI" id="CHEBI:30616"/>
        <note>ligand shared between two neighboring subunits</note>
    </ligand>
</feature>
<feature type="binding site" evidence="1">
    <location>
        <position position="264"/>
    </location>
    <ligand>
        <name>ATP</name>
        <dbReference type="ChEBI" id="CHEBI:30616"/>
        <note>ligand shared between two neighboring subunits</note>
    </ligand>
</feature>
<feature type="binding site" evidence="1">
    <location>
        <position position="268"/>
    </location>
    <ligand>
        <name>ATP</name>
        <dbReference type="ChEBI" id="CHEBI:30616"/>
        <note>ligand shared between two neighboring subunits</note>
    </ligand>
</feature>
<feature type="binding site" description="in other chain" evidence="1">
    <location>
        <position position="272"/>
    </location>
    <ligand>
        <name>L-methionine</name>
        <dbReference type="ChEBI" id="CHEBI:57844"/>
        <note>ligand shared between two neighboring subunits</note>
    </ligand>
</feature>
<reference key="1">
    <citation type="submission" date="2006-08" db="EMBL/GenBank/DDBJ databases">
        <title>Complete sequence of Maricaulis maris MCS10.</title>
        <authorList>
            <consortium name="US DOE Joint Genome Institute"/>
            <person name="Copeland A."/>
            <person name="Lucas S."/>
            <person name="Lapidus A."/>
            <person name="Barry K."/>
            <person name="Detter J.C."/>
            <person name="Glavina del Rio T."/>
            <person name="Hammon N."/>
            <person name="Israni S."/>
            <person name="Dalin E."/>
            <person name="Tice H."/>
            <person name="Pitluck S."/>
            <person name="Saunders E."/>
            <person name="Brettin T."/>
            <person name="Bruce D."/>
            <person name="Han C."/>
            <person name="Tapia R."/>
            <person name="Gilna P."/>
            <person name="Schmutz J."/>
            <person name="Larimer F."/>
            <person name="Land M."/>
            <person name="Hauser L."/>
            <person name="Kyrpides N."/>
            <person name="Mikhailova N."/>
            <person name="Viollier P."/>
            <person name="Stephens C."/>
            <person name="Richardson P."/>
        </authorList>
    </citation>
    <scope>NUCLEOTIDE SEQUENCE [LARGE SCALE GENOMIC DNA]</scope>
    <source>
        <strain>MCS10</strain>
    </source>
</reference>
<gene>
    <name evidence="1" type="primary">metK</name>
    <name type="ordered locus">Mmar10_2439</name>
</gene>
<proteinExistence type="inferred from homology"/>
<protein>
    <recommendedName>
        <fullName evidence="1">S-adenosylmethionine synthase</fullName>
        <shortName evidence="1">AdoMet synthase</shortName>
        <ecNumber evidence="1">2.5.1.6</ecNumber>
    </recommendedName>
    <alternativeName>
        <fullName evidence="1">MAT</fullName>
    </alternativeName>
    <alternativeName>
        <fullName evidence="1">Methionine adenosyltransferase</fullName>
    </alternativeName>
</protein>
<sequence>MSRSSYIFTSESVSEGHPDKVCDRISDTIVDLFLGKDPEARVACETLTTTNQIVLAGEVRCAAPIDDAEIEAAAREAVRDIGYEQDGFHWETATLQNFLHEQSVHIAQGVDASGDKDEGAGDQGIMFGYASDETPQLMPAPITYSHQILKRMAELRKSGARPEFEPDAKSQVTMRYENGVPAGVTSVVVSTQHKDGLTQDDIRELVRPVVQDVLPEGWFPPEEEFYVNPTGTFVIGGPDGDAGLTGRKIIVDTYGGAAPHGGGAFSGKDPTKVDRSAAYACRWLAKNVVAAELAKRCTIQVSYAIGVSKPLSLYVDLHGTGRVDEAKLEDALRQLADLSPRGIRTRLQLNKPIYARTAAYGHFGRTPTEDGGFSWERTDLADELRSLL</sequence>
<comment type="function">
    <text evidence="1">Catalyzes the formation of S-adenosylmethionine (AdoMet) from methionine and ATP. The overall synthetic reaction is composed of two sequential steps, AdoMet formation and the subsequent tripolyphosphate hydrolysis which occurs prior to release of AdoMet from the enzyme.</text>
</comment>
<comment type="catalytic activity">
    <reaction evidence="1">
        <text>L-methionine + ATP + H2O = S-adenosyl-L-methionine + phosphate + diphosphate</text>
        <dbReference type="Rhea" id="RHEA:21080"/>
        <dbReference type="ChEBI" id="CHEBI:15377"/>
        <dbReference type="ChEBI" id="CHEBI:30616"/>
        <dbReference type="ChEBI" id="CHEBI:33019"/>
        <dbReference type="ChEBI" id="CHEBI:43474"/>
        <dbReference type="ChEBI" id="CHEBI:57844"/>
        <dbReference type="ChEBI" id="CHEBI:59789"/>
        <dbReference type="EC" id="2.5.1.6"/>
    </reaction>
</comment>
<comment type="cofactor">
    <cofactor evidence="1">
        <name>Mg(2+)</name>
        <dbReference type="ChEBI" id="CHEBI:18420"/>
    </cofactor>
    <text evidence="1">Binds 2 divalent ions per subunit.</text>
</comment>
<comment type="cofactor">
    <cofactor evidence="1">
        <name>K(+)</name>
        <dbReference type="ChEBI" id="CHEBI:29103"/>
    </cofactor>
    <text evidence="1">Binds 1 potassium ion per subunit.</text>
</comment>
<comment type="pathway">
    <text evidence="1">Amino-acid biosynthesis; S-adenosyl-L-methionine biosynthesis; S-adenosyl-L-methionine from L-methionine: step 1/1.</text>
</comment>
<comment type="subunit">
    <text evidence="1">Homotetramer; dimer of dimers.</text>
</comment>
<comment type="subcellular location">
    <subcellularLocation>
        <location evidence="1">Cytoplasm</location>
    </subcellularLocation>
</comment>
<comment type="similarity">
    <text evidence="1">Belongs to the AdoMet synthase family.</text>
</comment>
<keyword id="KW-0067">ATP-binding</keyword>
<keyword id="KW-0963">Cytoplasm</keyword>
<keyword id="KW-0460">Magnesium</keyword>
<keyword id="KW-0479">Metal-binding</keyword>
<keyword id="KW-0547">Nucleotide-binding</keyword>
<keyword id="KW-0554">One-carbon metabolism</keyword>
<keyword id="KW-0630">Potassium</keyword>
<keyword id="KW-1185">Reference proteome</keyword>
<keyword id="KW-0808">Transferase</keyword>
<organism>
    <name type="scientific">Maricaulis maris (strain MCS10)</name>
    <name type="common">Caulobacter maris</name>
    <dbReference type="NCBI Taxonomy" id="394221"/>
    <lineage>
        <taxon>Bacteria</taxon>
        <taxon>Pseudomonadati</taxon>
        <taxon>Pseudomonadota</taxon>
        <taxon>Alphaproteobacteria</taxon>
        <taxon>Maricaulales</taxon>
        <taxon>Maricaulaceae</taxon>
        <taxon>Maricaulis</taxon>
    </lineage>
</organism>